<gene>
    <name type="ordered locus">Veis_2782</name>
</gene>
<protein>
    <recommendedName>
        <fullName evidence="1">Acetaldehyde dehydrogenase</fullName>
        <ecNumber evidence="1">1.2.1.10</ecNumber>
    </recommendedName>
    <alternativeName>
        <fullName evidence="1">Acetaldehyde dehydrogenase [acetylating]</fullName>
    </alternativeName>
</protein>
<organism>
    <name type="scientific">Verminephrobacter eiseniae (strain EF01-2)</name>
    <dbReference type="NCBI Taxonomy" id="391735"/>
    <lineage>
        <taxon>Bacteria</taxon>
        <taxon>Pseudomonadati</taxon>
        <taxon>Pseudomonadota</taxon>
        <taxon>Betaproteobacteria</taxon>
        <taxon>Burkholderiales</taxon>
        <taxon>Comamonadaceae</taxon>
        <taxon>Verminephrobacter</taxon>
    </lineage>
</organism>
<sequence length="303" mass="32263">MKKIKCALIGPGNIGTDLLAKLQRSPVLEPVWMVGIDPASDGLKRASEMGIKTTAEGVDGLIPHMKADGVQIVFDATSAYVHAENSAKVNAQGAMMIDLTPAAIGPYCVPPVNLKQHVGRREMNVNMVTCGGQATIPMVYAVSRVQPVAYGEIVATVSSRSVGPGTRKNIDEFTRTTAGAVEKVGGARQGKAIIIINPAEPPLIMRDTVHCLVEGKPDEAAITQSIHDMIREVQKYVPGYKLVNGPVFDGQRVSVFMEVEGLGDYLPKYAGNLDIMTAAAARTAEMFAEEILKGELVLEPVAA</sequence>
<dbReference type="EC" id="1.2.1.10" evidence="1"/>
<dbReference type="EMBL" id="CP000542">
    <property type="protein sequence ID" value="ABM58520.1"/>
    <property type="molecule type" value="Genomic_DNA"/>
</dbReference>
<dbReference type="RefSeq" id="WP_011810517.1">
    <property type="nucleotide sequence ID" value="NC_008786.1"/>
</dbReference>
<dbReference type="SMR" id="A1WLL3"/>
<dbReference type="STRING" id="391735.Veis_2782"/>
<dbReference type="GeneID" id="76461281"/>
<dbReference type="KEGG" id="vei:Veis_2782"/>
<dbReference type="eggNOG" id="COG4569">
    <property type="taxonomic scope" value="Bacteria"/>
</dbReference>
<dbReference type="HOGENOM" id="CLU_062208_0_0_4"/>
<dbReference type="Proteomes" id="UP000000374">
    <property type="component" value="Chromosome"/>
</dbReference>
<dbReference type="GO" id="GO:0008774">
    <property type="term" value="F:acetaldehyde dehydrogenase (acetylating) activity"/>
    <property type="evidence" value="ECO:0007669"/>
    <property type="project" value="UniProtKB-UniRule"/>
</dbReference>
<dbReference type="GO" id="GO:0051287">
    <property type="term" value="F:NAD binding"/>
    <property type="evidence" value="ECO:0007669"/>
    <property type="project" value="UniProtKB-UniRule"/>
</dbReference>
<dbReference type="GO" id="GO:0009056">
    <property type="term" value="P:catabolic process"/>
    <property type="evidence" value="ECO:0007669"/>
    <property type="project" value="UniProtKB-KW"/>
</dbReference>
<dbReference type="CDD" id="cd23933">
    <property type="entry name" value="ALDH_C"/>
    <property type="match status" value="1"/>
</dbReference>
<dbReference type="Gene3D" id="3.30.360.10">
    <property type="entry name" value="Dihydrodipicolinate Reductase, domain 2"/>
    <property type="match status" value="1"/>
</dbReference>
<dbReference type="Gene3D" id="3.40.50.720">
    <property type="entry name" value="NAD(P)-binding Rossmann-like Domain"/>
    <property type="match status" value="1"/>
</dbReference>
<dbReference type="HAMAP" id="MF_01657">
    <property type="entry name" value="Ac_ald_DH_ac"/>
    <property type="match status" value="1"/>
</dbReference>
<dbReference type="InterPro" id="IPR003361">
    <property type="entry name" value="Acetaldehyde_dehydrogenase"/>
</dbReference>
<dbReference type="InterPro" id="IPR015426">
    <property type="entry name" value="Acetylaldehyde_DH_C"/>
</dbReference>
<dbReference type="InterPro" id="IPR036291">
    <property type="entry name" value="NAD(P)-bd_dom_sf"/>
</dbReference>
<dbReference type="InterPro" id="IPR000534">
    <property type="entry name" value="Semialdehyde_DH_NAD-bd"/>
</dbReference>
<dbReference type="NCBIfam" id="TIGR03215">
    <property type="entry name" value="ac_ald_DH_ac"/>
    <property type="match status" value="1"/>
</dbReference>
<dbReference type="NCBIfam" id="NF006157">
    <property type="entry name" value="PRK08300.1"/>
    <property type="match status" value="1"/>
</dbReference>
<dbReference type="Pfam" id="PF09290">
    <property type="entry name" value="AcetDehyd-dimer"/>
    <property type="match status" value="1"/>
</dbReference>
<dbReference type="Pfam" id="PF01118">
    <property type="entry name" value="Semialdhyde_dh"/>
    <property type="match status" value="1"/>
</dbReference>
<dbReference type="PIRSF" id="PIRSF015689">
    <property type="entry name" value="Actaldh_dh_actl"/>
    <property type="match status" value="1"/>
</dbReference>
<dbReference type="SMART" id="SM00859">
    <property type="entry name" value="Semialdhyde_dh"/>
    <property type="match status" value="1"/>
</dbReference>
<dbReference type="SUPFAM" id="SSF55347">
    <property type="entry name" value="Glyceraldehyde-3-phosphate dehydrogenase-like, C-terminal domain"/>
    <property type="match status" value="1"/>
</dbReference>
<dbReference type="SUPFAM" id="SSF51735">
    <property type="entry name" value="NAD(P)-binding Rossmann-fold domains"/>
    <property type="match status" value="1"/>
</dbReference>
<feature type="chain" id="PRO_0000387750" description="Acetaldehyde dehydrogenase">
    <location>
        <begin position="1"/>
        <end position="303"/>
    </location>
</feature>
<feature type="active site" description="Acyl-thioester intermediate" evidence="1">
    <location>
        <position position="130"/>
    </location>
</feature>
<feature type="binding site" evidence="1">
    <location>
        <begin position="161"/>
        <end position="169"/>
    </location>
    <ligand>
        <name>NAD(+)</name>
        <dbReference type="ChEBI" id="CHEBI:57540"/>
    </ligand>
</feature>
<feature type="binding site" evidence="1">
    <location>
        <position position="272"/>
    </location>
    <ligand>
        <name>NAD(+)</name>
        <dbReference type="ChEBI" id="CHEBI:57540"/>
    </ligand>
</feature>
<accession>A1WLL3</accession>
<reference key="1">
    <citation type="submission" date="2006-12" db="EMBL/GenBank/DDBJ databases">
        <title>Complete sequence of chromosome 1 of Verminephrobacter eiseniae EF01-2.</title>
        <authorList>
            <person name="Copeland A."/>
            <person name="Lucas S."/>
            <person name="Lapidus A."/>
            <person name="Barry K."/>
            <person name="Detter J.C."/>
            <person name="Glavina del Rio T."/>
            <person name="Dalin E."/>
            <person name="Tice H."/>
            <person name="Pitluck S."/>
            <person name="Chertkov O."/>
            <person name="Brettin T."/>
            <person name="Bruce D."/>
            <person name="Han C."/>
            <person name="Tapia R."/>
            <person name="Gilna P."/>
            <person name="Schmutz J."/>
            <person name="Larimer F."/>
            <person name="Land M."/>
            <person name="Hauser L."/>
            <person name="Kyrpides N."/>
            <person name="Kim E."/>
            <person name="Stahl D."/>
            <person name="Richardson P."/>
        </authorList>
    </citation>
    <scope>NUCLEOTIDE SEQUENCE [LARGE SCALE GENOMIC DNA]</scope>
    <source>
        <strain>EF01-2</strain>
    </source>
</reference>
<evidence type="ECO:0000255" key="1">
    <source>
        <dbReference type="HAMAP-Rule" id="MF_01657"/>
    </source>
</evidence>
<name>ACDH_VEREI</name>
<comment type="catalytic activity">
    <reaction evidence="1">
        <text>acetaldehyde + NAD(+) + CoA = acetyl-CoA + NADH + H(+)</text>
        <dbReference type="Rhea" id="RHEA:23288"/>
        <dbReference type="ChEBI" id="CHEBI:15343"/>
        <dbReference type="ChEBI" id="CHEBI:15378"/>
        <dbReference type="ChEBI" id="CHEBI:57287"/>
        <dbReference type="ChEBI" id="CHEBI:57288"/>
        <dbReference type="ChEBI" id="CHEBI:57540"/>
        <dbReference type="ChEBI" id="CHEBI:57945"/>
        <dbReference type="EC" id="1.2.1.10"/>
    </reaction>
</comment>
<comment type="similarity">
    <text evidence="1">Belongs to the acetaldehyde dehydrogenase family.</text>
</comment>
<keyword id="KW-0058">Aromatic hydrocarbons catabolism</keyword>
<keyword id="KW-0520">NAD</keyword>
<keyword id="KW-0560">Oxidoreductase</keyword>
<keyword id="KW-1185">Reference proteome</keyword>
<proteinExistence type="inferred from homology"/>